<evidence type="ECO:0000255" key="1"/>
<evidence type="ECO:0000255" key="2">
    <source>
        <dbReference type="HAMAP-Rule" id="MF_01036"/>
    </source>
</evidence>
<name>RNB_ECOL5</name>
<feature type="chain" id="PRO_1000063886" description="Exoribonuclease 2">
    <location>
        <begin position="1"/>
        <end position="644"/>
    </location>
</feature>
<feature type="domain" description="RNB" evidence="1">
    <location>
        <begin position="189"/>
        <end position="516"/>
    </location>
</feature>
<feature type="domain" description="S1 motif" evidence="2">
    <location>
        <begin position="561"/>
        <end position="643"/>
    </location>
</feature>
<protein>
    <recommendedName>
        <fullName evidence="2">Exoribonuclease 2</fullName>
        <ecNumber evidence="2">3.1.13.1</ecNumber>
    </recommendedName>
    <alternativeName>
        <fullName evidence="2">Exoribonuclease II</fullName>
        <shortName evidence="2">RNase II</shortName>
        <shortName evidence="2">Ribonuclease II</shortName>
    </alternativeName>
</protein>
<dbReference type="EC" id="3.1.13.1" evidence="2"/>
<dbReference type="EMBL" id="CP000247">
    <property type="protein sequence ID" value="ABG69351.1"/>
    <property type="molecule type" value="Genomic_DNA"/>
</dbReference>
<dbReference type="RefSeq" id="WP_000485012.1">
    <property type="nucleotide sequence ID" value="NC_008253.1"/>
</dbReference>
<dbReference type="SMR" id="Q0TI78"/>
<dbReference type="KEGG" id="ecp:ECP_1340"/>
<dbReference type="HOGENOM" id="CLU_002333_7_3_6"/>
<dbReference type="Proteomes" id="UP000009182">
    <property type="component" value="Chromosome"/>
</dbReference>
<dbReference type="GO" id="GO:0005829">
    <property type="term" value="C:cytosol"/>
    <property type="evidence" value="ECO:0007669"/>
    <property type="project" value="TreeGrafter"/>
</dbReference>
<dbReference type="GO" id="GO:0008859">
    <property type="term" value="F:exoribonuclease II activity"/>
    <property type="evidence" value="ECO:0007669"/>
    <property type="project" value="UniProtKB-UniRule"/>
</dbReference>
<dbReference type="GO" id="GO:0003723">
    <property type="term" value="F:RNA binding"/>
    <property type="evidence" value="ECO:0007669"/>
    <property type="project" value="UniProtKB-KW"/>
</dbReference>
<dbReference type="GO" id="GO:0006402">
    <property type="term" value="P:mRNA catabolic process"/>
    <property type="evidence" value="ECO:0007669"/>
    <property type="project" value="UniProtKB-UniRule"/>
</dbReference>
<dbReference type="FunFam" id="2.40.50.140:FF:000079">
    <property type="entry name" value="Exoribonuclease 2"/>
    <property type="match status" value="1"/>
</dbReference>
<dbReference type="FunFam" id="2.40.50.140:FF:000081">
    <property type="entry name" value="Exoribonuclease 2"/>
    <property type="match status" value="1"/>
</dbReference>
<dbReference type="FunFam" id="2.40.50.640:FF:000001">
    <property type="entry name" value="Exoribonuclease 2"/>
    <property type="match status" value="1"/>
</dbReference>
<dbReference type="Gene3D" id="2.40.50.640">
    <property type="match status" value="1"/>
</dbReference>
<dbReference type="Gene3D" id="2.40.50.140">
    <property type="entry name" value="Nucleic acid-binding proteins"/>
    <property type="match status" value="2"/>
</dbReference>
<dbReference type="HAMAP" id="MF_01036">
    <property type="entry name" value="RNase_II"/>
    <property type="match status" value="1"/>
</dbReference>
<dbReference type="InterPro" id="IPR011129">
    <property type="entry name" value="CSD"/>
</dbReference>
<dbReference type="InterPro" id="IPR012340">
    <property type="entry name" value="NA-bd_OB-fold"/>
</dbReference>
<dbReference type="InterPro" id="IPR013223">
    <property type="entry name" value="RNase_B_OB_dom"/>
</dbReference>
<dbReference type="InterPro" id="IPR011804">
    <property type="entry name" value="RNase_II"/>
</dbReference>
<dbReference type="InterPro" id="IPR001900">
    <property type="entry name" value="RNase_II/R"/>
</dbReference>
<dbReference type="InterPro" id="IPR022966">
    <property type="entry name" value="RNase_II/R_CS"/>
</dbReference>
<dbReference type="InterPro" id="IPR004476">
    <property type="entry name" value="RNase_II/RNase_R"/>
</dbReference>
<dbReference type="InterPro" id="IPR050180">
    <property type="entry name" value="RNR_Ribonuclease"/>
</dbReference>
<dbReference type="InterPro" id="IPR003029">
    <property type="entry name" value="S1_domain"/>
</dbReference>
<dbReference type="NCBIfam" id="TIGR00358">
    <property type="entry name" value="3_prime_RNase"/>
    <property type="match status" value="1"/>
</dbReference>
<dbReference type="NCBIfam" id="NF003455">
    <property type="entry name" value="PRK05054.1"/>
    <property type="match status" value="1"/>
</dbReference>
<dbReference type="NCBIfam" id="TIGR02062">
    <property type="entry name" value="RNase_B"/>
    <property type="match status" value="1"/>
</dbReference>
<dbReference type="PANTHER" id="PTHR23355:SF37">
    <property type="entry name" value="EXORIBONUCLEASE 2"/>
    <property type="match status" value="1"/>
</dbReference>
<dbReference type="PANTHER" id="PTHR23355">
    <property type="entry name" value="RIBONUCLEASE"/>
    <property type="match status" value="1"/>
</dbReference>
<dbReference type="Pfam" id="PF08206">
    <property type="entry name" value="OB_RNB"/>
    <property type="match status" value="1"/>
</dbReference>
<dbReference type="Pfam" id="PF00773">
    <property type="entry name" value="RNB"/>
    <property type="match status" value="1"/>
</dbReference>
<dbReference type="Pfam" id="PF00575">
    <property type="entry name" value="S1"/>
    <property type="match status" value="1"/>
</dbReference>
<dbReference type="SMART" id="SM00357">
    <property type="entry name" value="CSP"/>
    <property type="match status" value="1"/>
</dbReference>
<dbReference type="SMART" id="SM00955">
    <property type="entry name" value="RNB"/>
    <property type="match status" value="1"/>
</dbReference>
<dbReference type="SUPFAM" id="SSF50249">
    <property type="entry name" value="Nucleic acid-binding proteins"/>
    <property type="match status" value="4"/>
</dbReference>
<dbReference type="PROSITE" id="PS01175">
    <property type="entry name" value="RIBONUCLEASE_II"/>
    <property type="match status" value="1"/>
</dbReference>
<sequence>MFQDNPLLAQLKQQLHSQTPRAEGVVKATEKGFGFLEVDAQKSYFIPPPQMKKVMHGDRIIAVIHSEKERESAEPEELVEPFLTRFVGKVQGKNDRLAIVPDHPLLKDAIPCRAARGLNHEFKEGDWAVAEMRRHPLKGDRSFYAELTQYITFGDDHFVPWWVTLARHNLEKEAPDGVATEMLDEGLVREDLTALDFVTIDSASTEDMDDALFAKALPDGKLQLIVAIADPTAWIAEGSKLDKAAKIRAFTNYLPGFNIPMLPRELSDDLCSLRANEVRPVLACRMTLSTDGTIEDNIEFFAATIESKAKLVYDQVSDWLENTGDWQPESEAIAEQVRLLAQICQRRGEWRHNHALVFKDRPDYRFILGEKGEVLDIVAEPRRIANRIVEEAMIAANICAARVLRDKLGFGIYNVHMGFDPANADALAALLKTHGLHVDAEEVLTLDGFCKLRRELDAQPTGFLDSRIRRFQSFAEISTEPGPHFGLGLEAYATWTSPIRKYGDMINHRLLKAVIKGETATRPQDEITVQMAERRRLNRMAERDVGDWLYARFLKDKAGTDTRFAAEIVDISRGGMRVRLVDNGAIAFIPAPFLHAVRDELVCSQENGTVQIKGETAYKVTDVIDVTIAEVRMETRSIIARPVA</sequence>
<reference key="1">
    <citation type="journal article" date="2006" name="Mol. Microbiol.">
        <title>Role of pathogenicity island-associated integrases in the genome plasticity of uropathogenic Escherichia coli strain 536.</title>
        <authorList>
            <person name="Hochhut B."/>
            <person name="Wilde C."/>
            <person name="Balling G."/>
            <person name="Middendorf B."/>
            <person name="Dobrindt U."/>
            <person name="Brzuszkiewicz E."/>
            <person name="Gottschalk G."/>
            <person name="Carniel E."/>
            <person name="Hacker J."/>
        </authorList>
    </citation>
    <scope>NUCLEOTIDE SEQUENCE [LARGE SCALE GENOMIC DNA]</scope>
    <source>
        <strain>536 / UPEC</strain>
    </source>
</reference>
<organism>
    <name type="scientific">Escherichia coli O6:K15:H31 (strain 536 / UPEC)</name>
    <dbReference type="NCBI Taxonomy" id="362663"/>
    <lineage>
        <taxon>Bacteria</taxon>
        <taxon>Pseudomonadati</taxon>
        <taxon>Pseudomonadota</taxon>
        <taxon>Gammaproteobacteria</taxon>
        <taxon>Enterobacterales</taxon>
        <taxon>Enterobacteriaceae</taxon>
        <taxon>Escherichia</taxon>
    </lineage>
</organism>
<accession>Q0TI78</accession>
<proteinExistence type="inferred from homology"/>
<gene>
    <name evidence="2" type="primary">rnb</name>
    <name type="ordered locus">ECP_1340</name>
</gene>
<comment type="function">
    <text evidence="2">Involved in mRNA degradation. Hydrolyzes single-stranded polyribonucleotides processively in the 3' to 5' direction.</text>
</comment>
<comment type="catalytic activity">
    <reaction evidence="2">
        <text>Exonucleolytic cleavage in the 3'- to 5'-direction to yield nucleoside 5'-phosphates.</text>
        <dbReference type="EC" id="3.1.13.1"/>
    </reaction>
</comment>
<comment type="subcellular location">
    <subcellularLocation>
        <location evidence="2">Cytoplasm</location>
    </subcellularLocation>
</comment>
<comment type="similarity">
    <text evidence="2">Belongs to the RNR ribonuclease family. RNase II subfamily.</text>
</comment>
<keyword id="KW-0963">Cytoplasm</keyword>
<keyword id="KW-0269">Exonuclease</keyword>
<keyword id="KW-0378">Hydrolase</keyword>
<keyword id="KW-0540">Nuclease</keyword>
<keyword id="KW-0694">RNA-binding</keyword>